<gene>
    <name evidence="1" type="primary">btuC</name>
    <name type="ordered locus">ECIAI1_1767</name>
</gene>
<evidence type="ECO:0000255" key="1">
    <source>
        <dbReference type="HAMAP-Rule" id="MF_01004"/>
    </source>
</evidence>
<keyword id="KW-0997">Cell inner membrane</keyword>
<keyword id="KW-1003">Cell membrane</keyword>
<keyword id="KW-0472">Membrane</keyword>
<keyword id="KW-0812">Transmembrane</keyword>
<keyword id="KW-1133">Transmembrane helix</keyword>
<keyword id="KW-0813">Transport</keyword>
<feature type="chain" id="PRO_1000201549" description="Vitamin B12 import system permease protein BtuC">
    <location>
        <begin position="1"/>
        <end position="326"/>
    </location>
</feature>
<feature type="transmembrane region" description="Helical" evidence="1">
    <location>
        <begin position="15"/>
        <end position="35"/>
    </location>
</feature>
<feature type="transmembrane region" description="Helical" evidence="1">
    <location>
        <begin position="61"/>
        <end position="81"/>
    </location>
</feature>
<feature type="transmembrane region" description="Helical" evidence="1">
    <location>
        <begin position="88"/>
        <end position="108"/>
    </location>
</feature>
<feature type="transmembrane region" description="Helical" evidence="1">
    <location>
        <begin position="112"/>
        <end position="132"/>
    </location>
</feature>
<feature type="transmembrane region" description="Helical" evidence="1">
    <location>
        <begin position="146"/>
        <end position="166"/>
    </location>
</feature>
<feature type="transmembrane region" description="Helical" evidence="1">
    <location>
        <begin position="184"/>
        <end position="204"/>
    </location>
</feature>
<feature type="transmembrane region" description="Helical" evidence="1">
    <location>
        <begin position="240"/>
        <end position="260"/>
    </location>
</feature>
<feature type="transmembrane region" description="Helical" evidence="1">
    <location>
        <begin position="274"/>
        <end position="294"/>
    </location>
</feature>
<feature type="transmembrane region" description="Helical" evidence="1">
    <location>
        <begin position="302"/>
        <end position="322"/>
    </location>
</feature>
<accession>B7M1C0</accession>
<reference key="1">
    <citation type="journal article" date="2009" name="PLoS Genet.">
        <title>Organised genome dynamics in the Escherichia coli species results in highly diverse adaptive paths.</title>
        <authorList>
            <person name="Touchon M."/>
            <person name="Hoede C."/>
            <person name="Tenaillon O."/>
            <person name="Barbe V."/>
            <person name="Baeriswyl S."/>
            <person name="Bidet P."/>
            <person name="Bingen E."/>
            <person name="Bonacorsi S."/>
            <person name="Bouchier C."/>
            <person name="Bouvet O."/>
            <person name="Calteau A."/>
            <person name="Chiapello H."/>
            <person name="Clermont O."/>
            <person name="Cruveiller S."/>
            <person name="Danchin A."/>
            <person name="Diard M."/>
            <person name="Dossat C."/>
            <person name="Karoui M.E."/>
            <person name="Frapy E."/>
            <person name="Garry L."/>
            <person name="Ghigo J.M."/>
            <person name="Gilles A.M."/>
            <person name="Johnson J."/>
            <person name="Le Bouguenec C."/>
            <person name="Lescat M."/>
            <person name="Mangenot S."/>
            <person name="Martinez-Jehanne V."/>
            <person name="Matic I."/>
            <person name="Nassif X."/>
            <person name="Oztas S."/>
            <person name="Petit M.A."/>
            <person name="Pichon C."/>
            <person name="Rouy Z."/>
            <person name="Ruf C.S."/>
            <person name="Schneider D."/>
            <person name="Tourret J."/>
            <person name="Vacherie B."/>
            <person name="Vallenet D."/>
            <person name="Medigue C."/>
            <person name="Rocha E.P.C."/>
            <person name="Denamur E."/>
        </authorList>
    </citation>
    <scope>NUCLEOTIDE SEQUENCE [LARGE SCALE GENOMIC DNA]</scope>
    <source>
        <strain>IAI1</strain>
    </source>
</reference>
<name>BTUC_ECO8A</name>
<proteinExistence type="inferred from homology"/>
<organism>
    <name type="scientific">Escherichia coli O8 (strain IAI1)</name>
    <dbReference type="NCBI Taxonomy" id="585034"/>
    <lineage>
        <taxon>Bacteria</taxon>
        <taxon>Pseudomonadati</taxon>
        <taxon>Pseudomonadota</taxon>
        <taxon>Gammaproteobacteria</taxon>
        <taxon>Enterobacterales</taxon>
        <taxon>Enterobacteriaceae</taxon>
        <taxon>Escherichia</taxon>
    </lineage>
</organism>
<comment type="function">
    <text evidence="1">Part of the ABC transporter complex BtuCDF involved in vitamin B12 import. Involved in the translocation of the substrate across the membrane.</text>
</comment>
<comment type="subunit">
    <text evidence="1">The complex is composed of two ATP-binding proteins (BtuD), two transmembrane proteins (BtuC) and a solute-binding protein (BtuF).</text>
</comment>
<comment type="subcellular location">
    <subcellularLocation>
        <location evidence="1">Cell inner membrane</location>
        <topology evidence="1">Multi-pass membrane protein</topology>
    </subcellularLocation>
</comment>
<comment type="similarity">
    <text evidence="1">Belongs to the binding-protein-dependent transport system permease family. FecCD subfamily.</text>
</comment>
<dbReference type="EMBL" id="CU928160">
    <property type="protein sequence ID" value="CAQ98624.1"/>
    <property type="molecule type" value="Genomic_DNA"/>
</dbReference>
<dbReference type="RefSeq" id="WP_000956519.1">
    <property type="nucleotide sequence ID" value="NC_011741.1"/>
</dbReference>
<dbReference type="SMR" id="B7M1C0"/>
<dbReference type="KEGG" id="ecr:ECIAI1_1767"/>
<dbReference type="HOGENOM" id="CLU_013016_0_3_6"/>
<dbReference type="GO" id="GO:0005886">
    <property type="term" value="C:plasma membrane"/>
    <property type="evidence" value="ECO:0007669"/>
    <property type="project" value="UniProtKB-SubCell"/>
</dbReference>
<dbReference type="GO" id="GO:0090482">
    <property type="term" value="F:vitamin transmembrane transporter activity"/>
    <property type="evidence" value="ECO:0007669"/>
    <property type="project" value="UniProtKB-UniRule"/>
</dbReference>
<dbReference type="GO" id="GO:0015889">
    <property type="term" value="P:cobalamin transport"/>
    <property type="evidence" value="ECO:0007669"/>
    <property type="project" value="UniProtKB-UniRule"/>
</dbReference>
<dbReference type="CDD" id="cd06550">
    <property type="entry name" value="TM_ABC_iron-siderophores_like"/>
    <property type="match status" value="1"/>
</dbReference>
<dbReference type="FunFam" id="1.10.3470.10:FF:000001">
    <property type="entry name" value="Vitamin B12 ABC transporter permease BtuC"/>
    <property type="match status" value="1"/>
</dbReference>
<dbReference type="Gene3D" id="1.10.3470.10">
    <property type="entry name" value="ABC transporter involved in vitamin B12 uptake, BtuC"/>
    <property type="match status" value="1"/>
</dbReference>
<dbReference type="HAMAP" id="MF_01004">
    <property type="entry name" value="BtuC"/>
    <property type="match status" value="1"/>
</dbReference>
<dbReference type="InterPro" id="IPR037294">
    <property type="entry name" value="ABC_BtuC-like"/>
</dbReference>
<dbReference type="InterPro" id="IPR023691">
    <property type="entry name" value="ABC_transptr_BtuC"/>
</dbReference>
<dbReference type="InterPro" id="IPR000522">
    <property type="entry name" value="ABC_transptr_permease_BtuC"/>
</dbReference>
<dbReference type="NCBIfam" id="NF003001">
    <property type="entry name" value="PRK03784.1"/>
    <property type="match status" value="1"/>
</dbReference>
<dbReference type="PANTHER" id="PTHR30472">
    <property type="entry name" value="FERRIC ENTEROBACTIN TRANSPORT SYSTEM PERMEASE PROTEIN"/>
    <property type="match status" value="1"/>
</dbReference>
<dbReference type="PANTHER" id="PTHR30472:SF29">
    <property type="entry name" value="VITAMIN B12 IMPORT SYSTEM PERMEASE PROTEIN BTUC"/>
    <property type="match status" value="1"/>
</dbReference>
<dbReference type="Pfam" id="PF01032">
    <property type="entry name" value="FecCD"/>
    <property type="match status" value="1"/>
</dbReference>
<dbReference type="SUPFAM" id="SSF81345">
    <property type="entry name" value="ABC transporter involved in vitamin B12 uptake, BtuC"/>
    <property type="match status" value="1"/>
</dbReference>
<protein>
    <recommendedName>
        <fullName evidence="1">Vitamin B12 import system permease protein BtuC</fullName>
    </recommendedName>
</protein>
<sequence>MLTLARQQQRQNIRWLLCLSVLMLLALLLSLCAGEQWISPGDWFSPRGELFVWQIRLPRTLAVLLVGAALAISGAVMQALFENPLAEPGLLGVSNGAGVGLIAAVLLGQGQLPNWALGLCAIAGALIITLILLRFARRHLSTSRLLLAGVALGIICSALMTWAIYFSTSVDLRQLMYWMMGGFGGVDWRQSWLMLALIPVLLWICCQSRPMNMLALGEISARQLGLPLWFWRNVLVAATGWMVGVSVALAGAIGFIGLVIPHILRLCGLTDHRVLLPGCALAGASALLLADVVARLALAAAELPIGVVTATLGAPVFIWLLLKAGR</sequence>